<dbReference type="EMBL" id="X97490">
    <property type="protein sequence ID" value="CAA66121.1"/>
    <property type="status" value="ALT_INIT"/>
    <property type="molecule type" value="mRNA"/>
</dbReference>
<dbReference type="EMBL" id="BC082545">
    <property type="protein sequence ID" value="AAH82545.2"/>
    <property type="molecule type" value="mRNA"/>
</dbReference>
<dbReference type="EMBL" id="BC125650">
    <property type="protein sequence ID" value="AAI25651.1"/>
    <property type="molecule type" value="mRNA"/>
</dbReference>
<dbReference type="EMBL" id="BC125654">
    <property type="protein sequence ID" value="AAI25655.1"/>
    <property type="molecule type" value="mRNA"/>
</dbReference>
<dbReference type="CCDS" id="CCDS29514.1"/>
<dbReference type="PIR" id="JC4871">
    <property type="entry name" value="JC4871"/>
</dbReference>
<dbReference type="RefSeq" id="NP_032915.2">
    <property type="nucleotide sequence ID" value="NM_008889.2"/>
</dbReference>
<dbReference type="BioGRID" id="202273">
    <property type="interactions" value="3"/>
</dbReference>
<dbReference type="FunCoup" id="Q62084">
    <property type="interactions" value="190"/>
</dbReference>
<dbReference type="STRING" id="10090.ENSMUSP00000064129"/>
<dbReference type="iPTMnet" id="Q62084"/>
<dbReference type="PhosphoSitePlus" id="Q62084"/>
<dbReference type="PaxDb" id="10090-ENSMUSP00000064129"/>
<dbReference type="PeptideAtlas" id="Q62084"/>
<dbReference type="ProteomicsDB" id="289868"/>
<dbReference type="Pumba" id="Q62084"/>
<dbReference type="Ensembl" id="ENSMUST00000070850.8">
    <property type="protein sequence ID" value="ENSMUSP00000064129.7"/>
    <property type="gene ID" value="ENSMUSG00000056612.8"/>
</dbReference>
<dbReference type="GeneID" id="18938"/>
<dbReference type="KEGG" id="mmu:18938"/>
<dbReference type="UCSC" id="uc008gjs.1">
    <property type="organism name" value="mouse"/>
</dbReference>
<dbReference type="AGR" id="MGI:107682"/>
<dbReference type="CTD" id="26472"/>
<dbReference type="MGI" id="MGI:107682">
    <property type="gene designation" value="Ppp1r14b"/>
</dbReference>
<dbReference type="VEuPathDB" id="HostDB:ENSMUSG00000056612"/>
<dbReference type="eggNOG" id="KOG0824">
    <property type="taxonomic scope" value="Eukaryota"/>
</dbReference>
<dbReference type="GeneTree" id="ENSGT00950000182985"/>
<dbReference type="HOGENOM" id="CLU_114155_1_0_1"/>
<dbReference type="InParanoid" id="Q62084"/>
<dbReference type="OMA" id="RLNIEEW"/>
<dbReference type="OrthoDB" id="73042at9989"/>
<dbReference type="PhylomeDB" id="Q62084"/>
<dbReference type="TreeFam" id="TF105546"/>
<dbReference type="BioGRID-ORCS" id="18938">
    <property type="hits" value="4 hits in 79 CRISPR screens"/>
</dbReference>
<dbReference type="ChiTaRS" id="Ppp1r14b">
    <property type="organism name" value="mouse"/>
</dbReference>
<dbReference type="PRO" id="PR:Q62084"/>
<dbReference type="Proteomes" id="UP000000589">
    <property type="component" value="Chromosome 19"/>
</dbReference>
<dbReference type="RNAct" id="Q62084">
    <property type="molecule type" value="protein"/>
</dbReference>
<dbReference type="Bgee" id="ENSMUSG00000056612">
    <property type="expression patterns" value="Expressed in cortical plate and 91 other cell types or tissues"/>
</dbReference>
<dbReference type="ExpressionAtlas" id="Q62084">
    <property type="expression patterns" value="baseline and differential"/>
</dbReference>
<dbReference type="GO" id="GO:0005737">
    <property type="term" value="C:cytoplasm"/>
    <property type="evidence" value="ECO:0007669"/>
    <property type="project" value="UniProtKB-SubCell"/>
</dbReference>
<dbReference type="GO" id="GO:0004864">
    <property type="term" value="F:protein phosphatase inhibitor activity"/>
    <property type="evidence" value="ECO:0007669"/>
    <property type="project" value="UniProtKB-KW"/>
</dbReference>
<dbReference type="FunFam" id="1.10.150.220:FF:000001">
    <property type="entry name" value="Phosphatase 1, regulatory (Inhibitor) subunit 14C"/>
    <property type="match status" value="1"/>
</dbReference>
<dbReference type="Gene3D" id="1.10.150.220">
    <property type="entry name" value="CPI-17"/>
    <property type="match status" value="1"/>
</dbReference>
<dbReference type="InterPro" id="IPR008025">
    <property type="entry name" value="CPI-17"/>
</dbReference>
<dbReference type="InterPro" id="IPR036658">
    <property type="entry name" value="CPI-17_sf"/>
</dbReference>
<dbReference type="PANTHER" id="PTHR16188">
    <property type="entry name" value="PROTEIN PHOSPHATASE 1 INHIBITOR POTENTIATED BY PROTEIN KINASE C"/>
    <property type="match status" value="1"/>
</dbReference>
<dbReference type="PANTHER" id="PTHR16188:SF5">
    <property type="entry name" value="PROTEIN PHOSPHATASE 1 REGULATORY SUBUNIT 14B"/>
    <property type="match status" value="1"/>
</dbReference>
<dbReference type="Pfam" id="PF05361">
    <property type="entry name" value="PP1_inhibitor"/>
    <property type="match status" value="1"/>
</dbReference>
<dbReference type="SUPFAM" id="SSF81790">
    <property type="entry name" value="Myosin phosphatase inhibitor 17kDa protein, CPI-17"/>
    <property type="match status" value="1"/>
</dbReference>
<comment type="function">
    <text evidence="4 5">Inhibitor of PPP1CA. Has over 50-fold higher inhibitory activity when phosphorylated.</text>
</comment>
<comment type="subcellular location">
    <subcellularLocation>
        <location evidence="7">Cytoplasm</location>
    </subcellularLocation>
</comment>
<comment type="tissue specificity">
    <text evidence="4 6">Ubiquitous. Highly expressed in testis. Detected at low levels in the other tissues tested. Highly expressed in cardiac muscle, bladder and aorta (at protein level).</text>
</comment>
<comment type="PTM">
    <text evidence="4 5">Phosphorylated primarily on Thr-57 by PKC (in vitro). An unknown Ser is also phosphorylated by PKC (in vitro).</text>
</comment>
<comment type="similarity">
    <text evidence="7">Belongs to the PP1 inhibitor family.</text>
</comment>
<comment type="sequence caution" evidence="7">
    <conflict type="erroneous initiation">
        <sequence resource="EMBL-CDS" id="CAA66121"/>
    </conflict>
</comment>
<name>PP14B_MOUSE</name>
<organism>
    <name type="scientific">Mus musculus</name>
    <name type="common">Mouse</name>
    <dbReference type="NCBI Taxonomy" id="10090"/>
    <lineage>
        <taxon>Eukaryota</taxon>
        <taxon>Metazoa</taxon>
        <taxon>Chordata</taxon>
        <taxon>Craniata</taxon>
        <taxon>Vertebrata</taxon>
        <taxon>Euteleostomi</taxon>
        <taxon>Mammalia</taxon>
        <taxon>Eutheria</taxon>
        <taxon>Euarchontoglires</taxon>
        <taxon>Glires</taxon>
        <taxon>Rodentia</taxon>
        <taxon>Myomorpha</taxon>
        <taxon>Muroidea</taxon>
        <taxon>Muridae</taxon>
        <taxon>Murinae</taxon>
        <taxon>Mus</taxon>
        <taxon>Mus</taxon>
    </lineage>
</organism>
<feature type="initiator methionine" description="Removed" evidence="1">
    <location>
        <position position="1"/>
    </location>
</feature>
<feature type="chain" id="PRO_0000071491" description="Protein phosphatase 1 regulatory subunit 14B">
    <location>
        <begin position="2"/>
        <end position="147"/>
    </location>
</feature>
<feature type="region of interest" description="Disordered" evidence="3">
    <location>
        <begin position="1"/>
        <end position="55"/>
    </location>
</feature>
<feature type="coiled-coil region" evidence="2">
    <location>
        <begin position="61"/>
        <end position="103"/>
    </location>
</feature>
<feature type="compositionally biased region" description="Low complexity" evidence="3">
    <location>
        <begin position="1"/>
        <end position="15"/>
    </location>
</feature>
<feature type="modified residue" description="N-acetylalanine" evidence="1">
    <location>
        <position position="2"/>
    </location>
</feature>
<feature type="modified residue" description="Phosphoserine" evidence="1">
    <location>
        <position position="21"/>
    </location>
</feature>
<feature type="modified residue" description="Phosphotyrosine" evidence="1">
    <location>
        <position position="29"/>
    </location>
</feature>
<feature type="modified residue" description="Phosphoserine" evidence="1">
    <location>
        <position position="32"/>
    </location>
</feature>
<feature type="modified residue" description="Phosphothreonine" evidence="4 5">
    <location>
        <position position="57"/>
    </location>
</feature>
<feature type="mutagenesis site" description="Abolishes phosphorylation and strongly reduces inhibitory activity." evidence="4">
    <original>T</original>
    <variation>A</variation>
    <location>
        <position position="57"/>
    </location>
</feature>
<reference key="1">
    <citation type="journal article" date="1996" name="Biochem. Biophys. Res. Commun.">
        <title>Sequence and expression of the mouse homologue to human phospholipase C beta3 neighboring gene.</title>
        <authorList>
            <person name="Lagercrantz J."/>
            <person name="Kedra D."/>
            <person name="Carson E."/>
            <person name="Nordenskjoeld M."/>
            <person name="Dumanski J.P."/>
            <person name="Weber G."/>
            <person name="Piehl F."/>
        </authorList>
    </citation>
    <scope>NUCLEOTIDE SEQUENCE [MRNA]</scope>
    <scope>TISSUE SPECIFICITY</scope>
</reference>
<reference key="2">
    <citation type="journal article" date="2004" name="Genome Res.">
        <title>The status, quality, and expansion of the NIH full-length cDNA project: the Mammalian Gene Collection (MGC).</title>
        <authorList>
            <consortium name="The MGC Project Team"/>
        </authorList>
    </citation>
    <scope>NUCLEOTIDE SEQUENCE [LARGE SCALE MRNA]</scope>
    <source>
        <strain>C57BL/6J</strain>
        <tissue>Brain</tissue>
    </source>
</reference>
<reference key="3">
    <citation type="journal article" date="1999" name="Biochemistry">
        <title>A novel phosphoprotein inhibitor of protein type-1 phosphatase holoenzymes.</title>
        <authorList>
            <person name="Eto M."/>
            <person name="Karginov A."/>
            <person name="Brautigan D.L."/>
        </authorList>
    </citation>
    <scope>FUNCTION</scope>
    <scope>MUTAGENESIS OF THR-57</scope>
    <scope>PHOSPHORYLATION AT THR-57</scope>
    <scope>TISSUE SPECIFICITY</scope>
</reference>
<reference key="4">
    <citation type="journal article" date="2002" name="Biochem. J.">
        <title>Phosphorylation of the myosin phosphatase inhibitors, CPI-17 and PHI-1, by integrin-linked kinase.</title>
        <authorList>
            <person name="Deng J.T."/>
            <person name="Sutherland C."/>
            <person name="Brautigan D.L."/>
            <person name="Eto M."/>
            <person name="Walsh M.P."/>
        </authorList>
    </citation>
    <scope>FUNCTION</scope>
    <scope>PHOSPHORYLATION AT THR-57</scope>
</reference>
<reference key="5">
    <citation type="journal article" date="2010" name="Cell">
        <title>A tissue-specific atlas of mouse protein phosphorylation and expression.</title>
        <authorList>
            <person name="Huttlin E.L."/>
            <person name="Jedrychowski M.P."/>
            <person name="Elias J.E."/>
            <person name="Goswami T."/>
            <person name="Rad R."/>
            <person name="Beausoleil S.A."/>
            <person name="Villen J."/>
            <person name="Haas W."/>
            <person name="Sowa M.E."/>
            <person name="Gygi S.P."/>
        </authorList>
    </citation>
    <scope>IDENTIFICATION BY MASS SPECTROMETRY [LARGE SCALE ANALYSIS]</scope>
    <source>
        <tissue>Brain</tissue>
        <tissue>Brown adipose tissue</tissue>
        <tissue>Kidney</tissue>
        <tissue>Liver</tissue>
        <tissue>Lung</tissue>
        <tissue>Pancreas</tissue>
        <tissue>Spleen</tissue>
        <tissue>Testis</tissue>
    </source>
</reference>
<accession>Q62084</accession>
<accession>Q640Q7</accession>
<evidence type="ECO:0000250" key="1">
    <source>
        <dbReference type="UniProtKB" id="Q96C90"/>
    </source>
</evidence>
<evidence type="ECO:0000255" key="2"/>
<evidence type="ECO:0000256" key="3">
    <source>
        <dbReference type="SAM" id="MobiDB-lite"/>
    </source>
</evidence>
<evidence type="ECO:0000269" key="4">
    <source>
    </source>
</evidence>
<evidence type="ECO:0000269" key="5">
    <source>
    </source>
</evidence>
<evidence type="ECO:0000269" key="6">
    <source>
    </source>
</evidence>
<evidence type="ECO:0000305" key="7"/>
<keyword id="KW-0007">Acetylation</keyword>
<keyword id="KW-0175">Coiled coil</keyword>
<keyword id="KW-0963">Cytoplasm</keyword>
<keyword id="KW-0597">Phosphoprotein</keyword>
<keyword id="KW-0650">Protein phosphatase inhibitor</keyword>
<keyword id="KW-1185">Reference proteome</keyword>
<protein>
    <recommendedName>
        <fullName>Protein phosphatase 1 regulatory subunit 14B</fullName>
    </recommendedName>
    <alternativeName>
        <fullName>Phosphatase holoenzyme inhibitor 1</fullName>
        <shortName>PHI-1</shortName>
    </alternativeName>
    <alternativeName>
        <fullName>Phospholipase C-beta-3 neighbouring gene protein</fullName>
    </alternativeName>
</protein>
<proteinExistence type="evidence at protein level"/>
<gene>
    <name type="primary">Ppp1r14b</name>
    <name type="synonym">Png</name>
</gene>
<sequence>MADSGPAGGAALAAPAPGPGSGSTGPRVYFQSPPGAAGEGPGGADDDGPVRRQGKVTVKYDRKELRKRLNLEEWILEQLTRLYDCQEEEIPELEIDVDELLDMESDDTRAARVKELLVDCYKPTEAFISGLLDKIRGMQKLSTPQKK</sequence>